<protein>
    <recommendedName>
        <fullName evidence="1">Shikimate kinase</fullName>
        <shortName evidence="1">SK</shortName>
        <ecNumber evidence="1">2.7.1.71</ecNumber>
    </recommendedName>
</protein>
<name>AROK_BACCQ</name>
<evidence type="ECO:0000255" key="1">
    <source>
        <dbReference type="HAMAP-Rule" id="MF_00109"/>
    </source>
</evidence>
<reference key="1">
    <citation type="journal article" date="2009" name="J. Bacteriol.">
        <title>Complete genome sequence of the extremophilic Bacillus cereus strain Q1 with industrial applications.</title>
        <authorList>
            <person name="Xiong Z."/>
            <person name="Jiang Y."/>
            <person name="Qi D."/>
            <person name="Lu H."/>
            <person name="Yang F."/>
            <person name="Yang J."/>
            <person name="Chen L."/>
            <person name="Sun L."/>
            <person name="Xu X."/>
            <person name="Xue Y."/>
            <person name="Zhu Y."/>
            <person name="Jin Q."/>
        </authorList>
    </citation>
    <scope>NUCLEOTIDE SEQUENCE [LARGE SCALE GENOMIC DNA]</scope>
    <source>
        <strain>Q1</strain>
    </source>
</reference>
<dbReference type="EC" id="2.7.1.71" evidence="1"/>
<dbReference type="EMBL" id="CP000227">
    <property type="protein sequence ID" value="ACM14447.1"/>
    <property type="molecule type" value="Genomic_DNA"/>
</dbReference>
<dbReference type="SMR" id="B9IXM6"/>
<dbReference type="KEGG" id="bcq:BCQ_4019"/>
<dbReference type="HOGENOM" id="CLU_057607_4_3_9"/>
<dbReference type="UniPathway" id="UPA00053">
    <property type="reaction ID" value="UER00088"/>
</dbReference>
<dbReference type="Proteomes" id="UP000000441">
    <property type="component" value="Chromosome"/>
</dbReference>
<dbReference type="GO" id="GO:0005829">
    <property type="term" value="C:cytosol"/>
    <property type="evidence" value="ECO:0007669"/>
    <property type="project" value="TreeGrafter"/>
</dbReference>
<dbReference type="GO" id="GO:0005524">
    <property type="term" value="F:ATP binding"/>
    <property type="evidence" value="ECO:0007669"/>
    <property type="project" value="UniProtKB-UniRule"/>
</dbReference>
<dbReference type="GO" id="GO:0000287">
    <property type="term" value="F:magnesium ion binding"/>
    <property type="evidence" value="ECO:0007669"/>
    <property type="project" value="UniProtKB-UniRule"/>
</dbReference>
<dbReference type="GO" id="GO:0004765">
    <property type="term" value="F:shikimate kinase activity"/>
    <property type="evidence" value="ECO:0007669"/>
    <property type="project" value="UniProtKB-UniRule"/>
</dbReference>
<dbReference type="GO" id="GO:0008652">
    <property type="term" value="P:amino acid biosynthetic process"/>
    <property type="evidence" value="ECO:0007669"/>
    <property type="project" value="UniProtKB-KW"/>
</dbReference>
<dbReference type="GO" id="GO:0009073">
    <property type="term" value="P:aromatic amino acid family biosynthetic process"/>
    <property type="evidence" value="ECO:0007669"/>
    <property type="project" value="UniProtKB-KW"/>
</dbReference>
<dbReference type="GO" id="GO:0009423">
    <property type="term" value="P:chorismate biosynthetic process"/>
    <property type="evidence" value="ECO:0007669"/>
    <property type="project" value="UniProtKB-UniRule"/>
</dbReference>
<dbReference type="CDD" id="cd00464">
    <property type="entry name" value="SK"/>
    <property type="match status" value="1"/>
</dbReference>
<dbReference type="Gene3D" id="3.40.50.300">
    <property type="entry name" value="P-loop containing nucleotide triphosphate hydrolases"/>
    <property type="match status" value="1"/>
</dbReference>
<dbReference type="HAMAP" id="MF_00109">
    <property type="entry name" value="Shikimate_kinase"/>
    <property type="match status" value="1"/>
</dbReference>
<dbReference type="InterPro" id="IPR027417">
    <property type="entry name" value="P-loop_NTPase"/>
</dbReference>
<dbReference type="InterPro" id="IPR031322">
    <property type="entry name" value="Shikimate/glucono_kinase"/>
</dbReference>
<dbReference type="InterPro" id="IPR000623">
    <property type="entry name" value="Shikimate_kinase/TSH1"/>
</dbReference>
<dbReference type="PANTHER" id="PTHR21087">
    <property type="entry name" value="SHIKIMATE KINASE"/>
    <property type="match status" value="1"/>
</dbReference>
<dbReference type="PANTHER" id="PTHR21087:SF16">
    <property type="entry name" value="SHIKIMATE KINASE 1, CHLOROPLASTIC"/>
    <property type="match status" value="1"/>
</dbReference>
<dbReference type="Pfam" id="PF01202">
    <property type="entry name" value="SKI"/>
    <property type="match status" value="1"/>
</dbReference>
<dbReference type="PRINTS" id="PR01100">
    <property type="entry name" value="SHIKIMTKNASE"/>
</dbReference>
<dbReference type="SUPFAM" id="SSF52540">
    <property type="entry name" value="P-loop containing nucleoside triphosphate hydrolases"/>
    <property type="match status" value="1"/>
</dbReference>
<accession>B9IXM6</accession>
<sequence length="165" mass="19385">MKSIYITGYMGAGKTTIGKALSKELHMDVIDTDQKIEEKQEKEIRDIFAEEGEMAFREYESEMLRSLPVENVIITTGGGIIEREENRKWMKENGTVVYLYCDPHVIAERLREDTTRPLFQKKDIDAFVMKFELRRAYYEEAHIHIDTTNKSVKQIMDELKEKINE</sequence>
<gene>
    <name evidence="1" type="primary">aroK</name>
    <name type="ordered locus">BCQ_4019</name>
</gene>
<organism>
    <name type="scientific">Bacillus cereus (strain Q1)</name>
    <dbReference type="NCBI Taxonomy" id="361100"/>
    <lineage>
        <taxon>Bacteria</taxon>
        <taxon>Bacillati</taxon>
        <taxon>Bacillota</taxon>
        <taxon>Bacilli</taxon>
        <taxon>Bacillales</taxon>
        <taxon>Bacillaceae</taxon>
        <taxon>Bacillus</taxon>
        <taxon>Bacillus cereus group</taxon>
    </lineage>
</organism>
<comment type="function">
    <text evidence="1">Catalyzes the specific phosphorylation of the 3-hydroxyl group of shikimic acid using ATP as a cosubstrate.</text>
</comment>
<comment type="catalytic activity">
    <reaction evidence="1">
        <text>shikimate + ATP = 3-phosphoshikimate + ADP + H(+)</text>
        <dbReference type="Rhea" id="RHEA:13121"/>
        <dbReference type="ChEBI" id="CHEBI:15378"/>
        <dbReference type="ChEBI" id="CHEBI:30616"/>
        <dbReference type="ChEBI" id="CHEBI:36208"/>
        <dbReference type="ChEBI" id="CHEBI:145989"/>
        <dbReference type="ChEBI" id="CHEBI:456216"/>
        <dbReference type="EC" id="2.7.1.71"/>
    </reaction>
</comment>
<comment type="cofactor">
    <cofactor evidence="1">
        <name>Mg(2+)</name>
        <dbReference type="ChEBI" id="CHEBI:18420"/>
    </cofactor>
    <text evidence="1">Binds 1 Mg(2+) ion per subunit.</text>
</comment>
<comment type="pathway">
    <text evidence="1">Metabolic intermediate biosynthesis; chorismate biosynthesis; chorismate from D-erythrose 4-phosphate and phosphoenolpyruvate: step 5/7.</text>
</comment>
<comment type="subunit">
    <text evidence="1">Monomer.</text>
</comment>
<comment type="subcellular location">
    <subcellularLocation>
        <location evidence="1">Cytoplasm</location>
    </subcellularLocation>
</comment>
<comment type="similarity">
    <text evidence="1">Belongs to the shikimate kinase family.</text>
</comment>
<feature type="chain" id="PRO_1000119046" description="Shikimate kinase">
    <location>
        <begin position="1"/>
        <end position="165"/>
    </location>
</feature>
<feature type="binding site" evidence="1">
    <location>
        <begin position="11"/>
        <end position="16"/>
    </location>
    <ligand>
        <name>ATP</name>
        <dbReference type="ChEBI" id="CHEBI:30616"/>
    </ligand>
</feature>
<feature type="binding site" evidence="1">
    <location>
        <position position="15"/>
    </location>
    <ligand>
        <name>Mg(2+)</name>
        <dbReference type="ChEBI" id="CHEBI:18420"/>
    </ligand>
</feature>
<feature type="binding site" evidence="1">
    <location>
        <position position="33"/>
    </location>
    <ligand>
        <name>substrate</name>
    </ligand>
</feature>
<feature type="binding site" evidence="1">
    <location>
        <position position="57"/>
    </location>
    <ligand>
        <name>substrate</name>
    </ligand>
</feature>
<feature type="binding site" evidence="1">
    <location>
        <position position="78"/>
    </location>
    <ligand>
        <name>substrate</name>
    </ligand>
</feature>
<feature type="binding site" evidence="1">
    <location>
        <position position="116"/>
    </location>
    <ligand>
        <name>ATP</name>
        <dbReference type="ChEBI" id="CHEBI:30616"/>
    </ligand>
</feature>
<feature type="binding site" evidence="1">
    <location>
        <position position="134"/>
    </location>
    <ligand>
        <name>substrate</name>
    </ligand>
</feature>
<proteinExistence type="inferred from homology"/>
<keyword id="KW-0028">Amino-acid biosynthesis</keyword>
<keyword id="KW-0057">Aromatic amino acid biosynthesis</keyword>
<keyword id="KW-0067">ATP-binding</keyword>
<keyword id="KW-0963">Cytoplasm</keyword>
<keyword id="KW-0418">Kinase</keyword>
<keyword id="KW-0460">Magnesium</keyword>
<keyword id="KW-0479">Metal-binding</keyword>
<keyword id="KW-0547">Nucleotide-binding</keyword>
<keyword id="KW-0808">Transferase</keyword>